<keyword id="KW-0067">ATP-binding</keyword>
<keyword id="KW-0436">Ligase</keyword>
<keyword id="KW-0547">Nucleotide-binding</keyword>
<comment type="function">
    <text evidence="1">With EpmB is involved in the beta-lysylation step of the post-translational modification of translation elongation factor P (EF-P) on 'Lys-34'. Catalyzes the ATP-dependent activation of (R)-beta-lysine produced by EpmB, forming a lysyl-adenylate, from which the beta-lysyl moiety is then transferred to the epsilon-amino group of EF-P 'Lys-34'.</text>
</comment>
<comment type="catalytic activity">
    <reaction evidence="1">
        <text>D-beta-lysine + L-lysyl-[protein] + ATP = N(6)-((3R)-3,6-diaminohexanoyl)-L-lysyl-[protein] + AMP + diphosphate + H(+)</text>
        <dbReference type="Rhea" id="RHEA:83435"/>
        <dbReference type="Rhea" id="RHEA-COMP:9752"/>
        <dbReference type="Rhea" id="RHEA-COMP:20131"/>
        <dbReference type="ChEBI" id="CHEBI:15378"/>
        <dbReference type="ChEBI" id="CHEBI:29969"/>
        <dbReference type="ChEBI" id="CHEBI:30616"/>
        <dbReference type="ChEBI" id="CHEBI:33019"/>
        <dbReference type="ChEBI" id="CHEBI:84138"/>
        <dbReference type="ChEBI" id="CHEBI:156053"/>
        <dbReference type="ChEBI" id="CHEBI:456215"/>
    </reaction>
    <physiologicalReaction direction="left-to-right" evidence="1">
        <dbReference type="Rhea" id="RHEA:83436"/>
    </physiologicalReaction>
</comment>
<comment type="subunit">
    <text evidence="1">Homodimer.</text>
</comment>
<comment type="similarity">
    <text evidence="1">Belongs to the class-II aminoacyl-tRNA synthetase family. EpmA subfamily.</text>
</comment>
<accession>B5R019</accession>
<organism>
    <name type="scientific">Salmonella enteritidis PT4 (strain P125109)</name>
    <dbReference type="NCBI Taxonomy" id="550537"/>
    <lineage>
        <taxon>Bacteria</taxon>
        <taxon>Pseudomonadati</taxon>
        <taxon>Pseudomonadota</taxon>
        <taxon>Gammaproteobacteria</taxon>
        <taxon>Enterobacterales</taxon>
        <taxon>Enterobacteriaceae</taxon>
        <taxon>Salmonella</taxon>
    </lineage>
</organism>
<sequence length="325" mass="36856">MSETATWQPSASIPNLLKRAAIMAEIRRFFADRGVLEVETPCMSQATVTDIHLFPFETRFVGPGHSQGINLYLMTSPEYHMKRLLAAGCGPVFQLCRSFRNEEMGRHHNPEFTMLEWYRPHYDMYRLMNEVDDLLQQVLDCQPAESLSYQQAFQRHLEIDPLSADKTQLREAAAKLDLSNIADTEEDRDTLLQLLFTMGVEPHIGKEKPTFIYHFPASQASLAQISTEDHRVAERFEVYYKGIELANGFHELTDAREQQQRFEQDNRKRAARGLPQQPIDQNLLDALAAGLPDCSGVALGVDRLVMLALGAESLADVIAFTVDRA</sequence>
<feature type="chain" id="PRO_1000097906" description="Elongation factor P--(R)-beta-lysine ligase">
    <location>
        <begin position="1"/>
        <end position="325"/>
    </location>
</feature>
<feature type="binding site" evidence="1">
    <location>
        <begin position="76"/>
        <end position="78"/>
    </location>
    <ligand>
        <name>substrate</name>
    </ligand>
</feature>
<feature type="binding site" evidence="1">
    <location>
        <begin position="100"/>
        <end position="102"/>
    </location>
    <ligand>
        <name>ATP</name>
        <dbReference type="ChEBI" id="CHEBI:30616"/>
    </ligand>
</feature>
<feature type="binding site" evidence="1">
    <location>
        <position position="109"/>
    </location>
    <ligand>
        <name>ATP</name>
        <dbReference type="ChEBI" id="CHEBI:30616"/>
    </ligand>
</feature>
<feature type="binding site" evidence="1">
    <location>
        <position position="118"/>
    </location>
    <ligand>
        <name>substrate</name>
    </ligand>
</feature>
<feature type="binding site" evidence="1">
    <location>
        <begin position="244"/>
        <end position="245"/>
    </location>
    <ligand>
        <name>ATP</name>
        <dbReference type="ChEBI" id="CHEBI:30616"/>
    </ligand>
</feature>
<feature type="binding site" evidence="1">
    <location>
        <position position="251"/>
    </location>
    <ligand>
        <name>substrate</name>
    </ligand>
</feature>
<feature type="binding site" evidence="1">
    <location>
        <position position="300"/>
    </location>
    <ligand>
        <name>ATP</name>
        <dbReference type="ChEBI" id="CHEBI:30616"/>
    </ligand>
</feature>
<dbReference type="EC" id="6.3.2.-" evidence="1"/>
<dbReference type="EMBL" id="AM933172">
    <property type="protein sequence ID" value="CAR35674.1"/>
    <property type="molecule type" value="Genomic_DNA"/>
</dbReference>
<dbReference type="RefSeq" id="WP_000004794.1">
    <property type="nucleotide sequence ID" value="NC_011294.1"/>
</dbReference>
<dbReference type="SMR" id="B5R019"/>
<dbReference type="KEGG" id="set:SEN4114"/>
<dbReference type="HOGENOM" id="CLU_008255_1_1_6"/>
<dbReference type="Proteomes" id="UP000000613">
    <property type="component" value="Chromosome"/>
</dbReference>
<dbReference type="GO" id="GO:0005829">
    <property type="term" value="C:cytosol"/>
    <property type="evidence" value="ECO:0007669"/>
    <property type="project" value="TreeGrafter"/>
</dbReference>
<dbReference type="GO" id="GO:0016880">
    <property type="term" value="F:acid-ammonia (or amide) ligase activity"/>
    <property type="evidence" value="ECO:0007669"/>
    <property type="project" value="UniProtKB-UniRule"/>
</dbReference>
<dbReference type="GO" id="GO:0005524">
    <property type="term" value="F:ATP binding"/>
    <property type="evidence" value="ECO:0007669"/>
    <property type="project" value="UniProtKB-UniRule"/>
</dbReference>
<dbReference type="GO" id="GO:0004824">
    <property type="term" value="F:lysine-tRNA ligase activity"/>
    <property type="evidence" value="ECO:0007669"/>
    <property type="project" value="InterPro"/>
</dbReference>
<dbReference type="GO" id="GO:0000049">
    <property type="term" value="F:tRNA binding"/>
    <property type="evidence" value="ECO:0007669"/>
    <property type="project" value="TreeGrafter"/>
</dbReference>
<dbReference type="GO" id="GO:0006430">
    <property type="term" value="P:lysyl-tRNA aminoacylation"/>
    <property type="evidence" value="ECO:0007669"/>
    <property type="project" value="InterPro"/>
</dbReference>
<dbReference type="FunFam" id="3.30.930.10:FF:000017">
    <property type="entry name" value="Elongation factor P--(R)-beta-lysine ligase"/>
    <property type="match status" value="1"/>
</dbReference>
<dbReference type="Gene3D" id="3.30.930.10">
    <property type="entry name" value="Bira Bifunctional Protein, Domain 2"/>
    <property type="match status" value="1"/>
</dbReference>
<dbReference type="HAMAP" id="MF_00174">
    <property type="entry name" value="EF_P_modif_A"/>
    <property type="match status" value="1"/>
</dbReference>
<dbReference type="InterPro" id="IPR004364">
    <property type="entry name" value="Aa-tRNA-synt_II"/>
</dbReference>
<dbReference type="InterPro" id="IPR006195">
    <property type="entry name" value="aa-tRNA-synth_II"/>
</dbReference>
<dbReference type="InterPro" id="IPR045864">
    <property type="entry name" value="aa-tRNA-synth_II/BPL/LPL"/>
</dbReference>
<dbReference type="InterPro" id="IPR004525">
    <property type="entry name" value="EpmA"/>
</dbReference>
<dbReference type="InterPro" id="IPR018149">
    <property type="entry name" value="Lys-tRNA-synth_II_C"/>
</dbReference>
<dbReference type="NCBIfam" id="TIGR00462">
    <property type="entry name" value="genX"/>
    <property type="match status" value="1"/>
</dbReference>
<dbReference type="NCBIfam" id="NF006828">
    <property type="entry name" value="PRK09350.1"/>
    <property type="match status" value="1"/>
</dbReference>
<dbReference type="PANTHER" id="PTHR42918:SF6">
    <property type="entry name" value="ELONGATION FACTOR P--(R)-BETA-LYSINE LIGASE"/>
    <property type="match status" value="1"/>
</dbReference>
<dbReference type="PANTHER" id="PTHR42918">
    <property type="entry name" value="LYSYL-TRNA SYNTHETASE"/>
    <property type="match status" value="1"/>
</dbReference>
<dbReference type="Pfam" id="PF00152">
    <property type="entry name" value="tRNA-synt_2"/>
    <property type="match status" value="1"/>
</dbReference>
<dbReference type="PRINTS" id="PR00982">
    <property type="entry name" value="TRNASYNTHLYS"/>
</dbReference>
<dbReference type="SUPFAM" id="SSF55681">
    <property type="entry name" value="Class II aaRS and biotin synthetases"/>
    <property type="match status" value="1"/>
</dbReference>
<dbReference type="PROSITE" id="PS50862">
    <property type="entry name" value="AA_TRNA_LIGASE_II"/>
    <property type="match status" value="1"/>
</dbReference>
<evidence type="ECO:0000255" key="1">
    <source>
        <dbReference type="HAMAP-Rule" id="MF_00174"/>
    </source>
</evidence>
<protein>
    <recommendedName>
        <fullName evidence="1">Elongation factor P--(R)-beta-lysine ligase</fullName>
        <shortName evidence="1">EF-P--(R)-beta-lysine ligase</shortName>
        <ecNumber evidence="1">6.3.2.-</ecNumber>
    </recommendedName>
    <alternativeName>
        <fullName evidence="1">EF-P post-translational modification enzyme A</fullName>
    </alternativeName>
    <alternativeName>
        <fullName evidence="1">EF-P-lysine lysyltransferase</fullName>
    </alternativeName>
</protein>
<name>EPMA_SALEP</name>
<gene>
    <name evidence="1" type="primary">epmA</name>
    <name type="synonym">yjeA</name>
    <name type="ordered locus">SEN4114</name>
</gene>
<reference key="1">
    <citation type="journal article" date="2008" name="Genome Res.">
        <title>Comparative genome analysis of Salmonella enteritidis PT4 and Salmonella gallinarum 287/91 provides insights into evolutionary and host adaptation pathways.</title>
        <authorList>
            <person name="Thomson N.R."/>
            <person name="Clayton D.J."/>
            <person name="Windhorst D."/>
            <person name="Vernikos G."/>
            <person name="Davidson S."/>
            <person name="Churcher C."/>
            <person name="Quail M.A."/>
            <person name="Stevens M."/>
            <person name="Jones M.A."/>
            <person name="Watson M."/>
            <person name="Barron A."/>
            <person name="Layton A."/>
            <person name="Pickard D."/>
            <person name="Kingsley R.A."/>
            <person name="Bignell A."/>
            <person name="Clark L."/>
            <person name="Harris B."/>
            <person name="Ormond D."/>
            <person name="Abdellah Z."/>
            <person name="Brooks K."/>
            <person name="Cherevach I."/>
            <person name="Chillingworth T."/>
            <person name="Woodward J."/>
            <person name="Norberczak H."/>
            <person name="Lord A."/>
            <person name="Arrowsmith C."/>
            <person name="Jagels K."/>
            <person name="Moule S."/>
            <person name="Mungall K."/>
            <person name="Saunders M."/>
            <person name="Whitehead S."/>
            <person name="Chabalgoity J.A."/>
            <person name="Maskell D."/>
            <person name="Humphreys T."/>
            <person name="Roberts M."/>
            <person name="Barrow P.A."/>
            <person name="Dougan G."/>
            <person name="Parkhill J."/>
        </authorList>
    </citation>
    <scope>NUCLEOTIDE SEQUENCE [LARGE SCALE GENOMIC DNA]</scope>
    <source>
        <strain>P125109</strain>
    </source>
</reference>
<proteinExistence type="inferred from homology"/>